<dbReference type="EC" id="4.1.1.23" evidence="1"/>
<dbReference type="EMBL" id="AF038845">
    <property type="protein sequence ID" value="AAC24044.1"/>
    <property type="molecule type" value="Genomic_DNA"/>
</dbReference>
<dbReference type="EMBL" id="AL445063">
    <property type="protein sequence ID" value="CAC11221.1"/>
    <property type="status" value="ALT_INIT"/>
    <property type="molecule type" value="Genomic_DNA"/>
</dbReference>
<dbReference type="PIR" id="T37332">
    <property type="entry name" value="T37332"/>
</dbReference>
<dbReference type="RefSeq" id="WP_048161418.1">
    <property type="nucleotide sequence ID" value="NC_002578.1"/>
</dbReference>
<dbReference type="SMR" id="O74110"/>
<dbReference type="FunCoup" id="O74110">
    <property type="interactions" value="55"/>
</dbReference>
<dbReference type="STRING" id="273075.gene:9571288"/>
<dbReference type="PaxDb" id="273075-Ta0073"/>
<dbReference type="EnsemblBacteria" id="CAC11221">
    <property type="protein sequence ID" value="CAC11221"/>
    <property type="gene ID" value="CAC11221"/>
</dbReference>
<dbReference type="KEGG" id="tac:Ta0073"/>
<dbReference type="eggNOG" id="arCOG00081">
    <property type="taxonomic scope" value="Archaea"/>
</dbReference>
<dbReference type="HOGENOM" id="CLU_067069_2_0_2"/>
<dbReference type="InParanoid" id="O74110"/>
<dbReference type="OrthoDB" id="94124at2157"/>
<dbReference type="BRENDA" id="4.1.1.23">
    <property type="organism ID" value="6324"/>
</dbReference>
<dbReference type="UniPathway" id="UPA00070">
    <property type="reaction ID" value="UER00120"/>
</dbReference>
<dbReference type="Proteomes" id="UP000001024">
    <property type="component" value="Chromosome"/>
</dbReference>
<dbReference type="GO" id="GO:0005829">
    <property type="term" value="C:cytosol"/>
    <property type="evidence" value="ECO:0007669"/>
    <property type="project" value="TreeGrafter"/>
</dbReference>
<dbReference type="GO" id="GO:0004590">
    <property type="term" value="F:orotidine-5'-phosphate decarboxylase activity"/>
    <property type="evidence" value="ECO:0007669"/>
    <property type="project" value="UniProtKB-UniRule"/>
</dbReference>
<dbReference type="GO" id="GO:0006207">
    <property type="term" value="P:'de novo' pyrimidine nucleobase biosynthetic process"/>
    <property type="evidence" value="ECO:0007669"/>
    <property type="project" value="InterPro"/>
</dbReference>
<dbReference type="GO" id="GO:0044205">
    <property type="term" value="P:'de novo' UMP biosynthetic process"/>
    <property type="evidence" value="ECO:0007669"/>
    <property type="project" value="UniProtKB-UniRule"/>
</dbReference>
<dbReference type="CDD" id="cd04725">
    <property type="entry name" value="OMP_decarboxylase_like"/>
    <property type="match status" value="1"/>
</dbReference>
<dbReference type="Gene3D" id="3.20.20.70">
    <property type="entry name" value="Aldolase class I"/>
    <property type="match status" value="1"/>
</dbReference>
<dbReference type="HAMAP" id="MF_01200_A">
    <property type="entry name" value="OMPdecase_type1_A"/>
    <property type="match status" value="1"/>
</dbReference>
<dbReference type="InterPro" id="IPR013785">
    <property type="entry name" value="Aldolase_TIM"/>
</dbReference>
<dbReference type="InterPro" id="IPR014732">
    <property type="entry name" value="OMPdecase"/>
</dbReference>
<dbReference type="InterPro" id="IPR047595">
    <property type="entry name" value="OMPdecase_arc"/>
</dbReference>
<dbReference type="InterPro" id="IPR001754">
    <property type="entry name" value="OMPdeCOase_dom"/>
</dbReference>
<dbReference type="InterPro" id="IPR011060">
    <property type="entry name" value="RibuloseP-bd_barrel"/>
</dbReference>
<dbReference type="NCBIfam" id="NF010386">
    <property type="entry name" value="PRK13813.1"/>
    <property type="match status" value="1"/>
</dbReference>
<dbReference type="NCBIfam" id="TIGR01740">
    <property type="entry name" value="pyrF"/>
    <property type="match status" value="1"/>
</dbReference>
<dbReference type="PANTHER" id="PTHR32119">
    <property type="entry name" value="OROTIDINE 5'-PHOSPHATE DECARBOXYLASE"/>
    <property type="match status" value="1"/>
</dbReference>
<dbReference type="PANTHER" id="PTHR32119:SF2">
    <property type="entry name" value="OROTIDINE 5'-PHOSPHATE DECARBOXYLASE"/>
    <property type="match status" value="1"/>
</dbReference>
<dbReference type="Pfam" id="PF00215">
    <property type="entry name" value="OMPdecase"/>
    <property type="match status" value="1"/>
</dbReference>
<dbReference type="SMART" id="SM00934">
    <property type="entry name" value="OMPdecase"/>
    <property type="match status" value="1"/>
</dbReference>
<dbReference type="SUPFAM" id="SSF51366">
    <property type="entry name" value="Ribulose-phoshate binding barrel"/>
    <property type="match status" value="1"/>
</dbReference>
<dbReference type="PROSITE" id="PS00156">
    <property type="entry name" value="OMPDECASE"/>
    <property type="match status" value="1"/>
</dbReference>
<reference key="1">
    <citation type="journal article" date="2000" name="Biochem. Biophys. Res. Commun.">
        <title>Cloning and characterization of ftsZ and pyrF from the archaeon Thermoplasma acidophilum.</title>
        <authorList>
            <person name="Yaoi T."/>
            <person name="Laksanalamai P."/>
            <person name="Jiemjit A."/>
            <person name="Kagawa H."/>
            <person name="Alton T."/>
            <person name="Trent J.D."/>
        </authorList>
    </citation>
    <scope>NUCLEOTIDE SEQUENCE [GENOMIC DNA]</scope>
    <scope>FUNCTION</scope>
</reference>
<reference key="2">
    <citation type="journal article" date="2000" name="Nature">
        <title>The genome sequence of the thermoacidophilic scavenger Thermoplasma acidophilum.</title>
        <authorList>
            <person name="Ruepp A."/>
            <person name="Graml W."/>
            <person name="Santos-Martinez M.-L."/>
            <person name="Koretke K.K."/>
            <person name="Volker C."/>
            <person name="Mewes H.-W."/>
            <person name="Frishman D."/>
            <person name="Stocker S."/>
            <person name="Lupas A.N."/>
            <person name="Baumeister W."/>
        </authorList>
    </citation>
    <scope>NUCLEOTIDE SEQUENCE [LARGE SCALE GENOMIC DNA]</scope>
    <source>
        <strain>ATCC 25905 / DSM 1728 / JCM 9062 / NBRC 15155 / AMRC-C165</strain>
    </source>
</reference>
<proteinExistence type="inferred from homology"/>
<sequence>MSESRLVVALDLTDKDRALEIARSIGRQVFAIKINWPLVLAGSGSIIGEIARVSRVVCDFKIADIPNTNSIIAKFARDQGAWGIISHSFTGLESLRSVVEASGDTKVFSVVAMSHPGSDLINDNYRKLMDISERAGVYGYIAPGNKLSDLSEIRKRTKKTIMSPGIGSQGGRASDAIKAGADLVIVGRSIYESADPVTAAEAINEEIAKAVEQN</sequence>
<name>PYRF_THEAC</name>
<accession>O74110</accession>
<evidence type="ECO:0000255" key="1">
    <source>
        <dbReference type="HAMAP-Rule" id="MF_01200"/>
    </source>
</evidence>
<evidence type="ECO:0000269" key="2">
    <source>
    </source>
</evidence>
<evidence type="ECO:0000305" key="3"/>
<comment type="function">
    <text evidence="1 2">Catalyzes the decarboxylation of orotidine 5'-monophosphate (OMP) to uridine 5'-monophosphate (UMP).</text>
</comment>
<comment type="catalytic activity">
    <reaction evidence="1">
        <text>orotidine 5'-phosphate + H(+) = UMP + CO2</text>
        <dbReference type="Rhea" id="RHEA:11596"/>
        <dbReference type="ChEBI" id="CHEBI:15378"/>
        <dbReference type="ChEBI" id="CHEBI:16526"/>
        <dbReference type="ChEBI" id="CHEBI:57538"/>
        <dbReference type="ChEBI" id="CHEBI:57865"/>
        <dbReference type="EC" id="4.1.1.23"/>
    </reaction>
</comment>
<comment type="pathway">
    <text evidence="1">Pyrimidine metabolism; UMP biosynthesis via de novo pathway; UMP from orotate: step 2/2.</text>
</comment>
<comment type="subunit">
    <text evidence="1">Homodimer.</text>
</comment>
<comment type="similarity">
    <text evidence="1">Belongs to the OMP decarboxylase family. Type 1 subfamily.</text>
</comment>
<comment type="sequence caution" evidence="3">
    <conflict type="erroneous initiation">
        <sequence resource="EMBL-CDS" id="CAC11221"/>
    </conflict>
</comment>
<gene>
    <name evidence="1" type="primary">pyrF</name>
    <name type="ordered locus">Ta0073</name>
</gene>
<feature type="chain" id="PRO_0000134620" description="Orotidine 5'-phosphate decarboxylase">
    <location>
        <begin position="1"/>
        <end position="214"/>
    </location>
</feature>
<feature type="active site" description="Proton donor" evidence="1">
    <location>
        <position position="61"/>
    </location>
</feature>
<feature type="binding site" evidence="1">
    <location>
        <position position="11"/>
    </location>
    <ligand>
        <name>substrate</name>
    </ligand>
</feature>
<feature type="binding site" evidence="1">
    <location>
        <position position="33"/>
    </location>
    <ligand>
        <name>substrate</name>
    </ligand>
</feature>
<feature type="binding site" evidence="1">
    <location>
        <begin position="59"/>
        <end position="68"/>
    </location>
    <ligand>
        <name>substrate</name>
    </ligand>
</feature>
<feature type="binding site" evidence="1">
    <location>
        <position position="114"/>
    </location>
    <ligand>
        <name>substrate</name>
    </ligand>
</feature>
<feature type="binding site" evidence="1">
    <location>
        <begin position="164"/>
        <end position="174"/>
    </location>
    <ligand>
        <name>substrate</name>
    </ligand>
</feature>
<feature type="binding site" evidence="1">
    <location>
        <position position="187"/>
    </location>
    <ligand>
        <name>substrate</name>
    </ligand>
</feature>
<feature type="binding site" evidence="1">
    <location>
        <position position="188"/>
    </location>
    <ligand>
        <name>substrate</name>
    </ligand>
</feature>
<feature type="sequence conflict" description="In Ref. 1; AAC24044." evidence="3" ref="1">
    <original>E</original>
    <variation>G</variation>
    <location>
        <position position="206"/>
    </location>
</feature>
<organism>
    <name type="scientific">Thermoplasma acidophilum (strain ATCC 25905 / DSM 1728 / JCM 9062 / NBRC 15155 / AMRC-C165)</name>
    <dbReference type="NCBI Taxonomy" id="273075"/>
    <lineage>
        <taxon>Archaea</taxon>
        <taxon>Methanobacteriati</taxon>
        <taxon>Thermoplasmatota</taxon>
        <taxon>Thermoplasmata</taxon>
        <taxon>Thermoplasmatales</taxon>
        <taxon>Thermoplasmataceae</taxon>
        <taxon>Thermoplasma</taxon>
    </lineage>
</organism>
<keyword id="KW-0210">Decarboxylase</keyword>
<keyword id="KW-0456">Lyase</keyword>
<keyword id="KW-0665">Pyrimidine biosynthesis</keyword>
<keyword id="KW-1185">Reference proteome</keyword>
<protein>
    <recommendedName>
        <fullName evidence="1">Orotidine 5'-phosphate decarboxylase</fullName>
        <ecNumber evidence="1">4.1.1.23</ecNumber>
    </recommendedName>
    <alternativeName>
        <fullName evidence="1">OMP decarboxylase</fullName>
        <shortName evidence="1">OMPDCase</shortName>
        <shortName evidence="1">OMPdecase</shortName>
    </alternativeName>
</protein>